<protein>
    <recommendedName>
        <fullName evidence="1">Methionyl-tRNA formyltransferase</fullName>
        <ecNumber evidence="1">2.1.2.9</ecNumber>
    </recommendedName>
</protein>
<reference key="1">
    <citation type="journal article" date="2005" name="Proc. Natl. Acad. Sci. U.S.A.">
        <title>Genome analysis of multiple pathogenic isolates of Streptococcus agalactiae: implications for the microbial 'pan-genome'.</title>
        <authorList>
            <person name="Tettelin H."/>
            <person name="Masignani V."/>
            <person name="Cieslewicz M.J."/>
            <person name="Donati C."/>
            <person name="Medini D."/>
            <person name="Ward N.L."/>
            <person name="Angiuoli S.V."/>
            <person name="Crabtree J."/>
            <person name="Jones A.L."/>
            <person name="Durkin A.S."/>
            <person name="DeBoy R.T."/>
            <person name="Davidsen T.M."/>
            <person name="Mora M."/>
            <person name="Scarselli M."/>
            <person name="Margarit y Ros I."/>
            <person name="Peterson J.D."/>
            <person name="Hauser C.R."/>
            <person name="Sundaram J.P."/>
            <person name="Nelson W.C."/>
            <person name="Madupu R."/>
            <person name="Brinkac L.M."/>
            <person name="Dodson R.J."/>
            <person name="Rosovitz M.J."/>
            <person name="Sullivan S.A."/>
            <person name="Daugherty S.C."/>
            <person name="Haft D.H."/>
            <person name="Selengut J."/>
            <person name="Gwinn M.L."/>
            <person name="Zhou L."/>
            <person name="Zafar N."/>
            <person name="Khouri H."/>
            <person name="Radune D."/>
            <person name="Dimitrov G."/>
            <person name="Watkins K."/>
            <person name="O'Connor K.J."/>
            <person name="Smith S."/>
            <person name="Utterback T.R."/>
            <person name="White O."/>
            <person name="Rubens C.E."/>
            <person name="Grandi G."/>
            <person name="Madoff L.C."/>
            <person name="Kasper D.L."/>
            <person name="Telford J.L."/>
            <person name="Wessels M.R."/>
            <person name="Rappuoli R."/>
            <person name="Fraser C.M."/>
        </authorList>
    </citation>
    <scope>NUCLEOTIDE SEQUENCE [LARGE SCALE GENOMIC DNA]</scope>
    <source>
        <strain>ATCC 27591 / A909 / CDC SS700</strain>
    </source>
</reference>
<evidence type="ECO:0000255" key="1">
    <source>
        <dbReference type="HAMAP-Rule" id="MF_00182"/>
    </source>
</evidence>
<comment type="function">
    <text evidence="1">Attaches a formyl group to the free amino group of methionyl-tRNA(fMet). The formyl group appears to play a dual role in the initiator identity of N-formylmethionyl-tRNA by promoting its recognition by IF2 and preventing the misappropriation of this tRNA by the elongation apparatus.</text>
</comment>
<comment type="catalytic activity">
    <reaction evidence="1">
        <text>L-methionyl-tRNA(fMet) + (6R)-10-formyltetrahydrofolate = N-formyl-L-methionyl-tRNA(fMet) + (6S)-5,6,7,8-tetrahydrofolate + H(+)</text>
        <dbReference type="Rhea" id="RHEA:24380"/>
        <dbReference type="Rhea" id="RHEA-COMP:9952"/>
        <dbReference type="Rhea" id="RHEA-COMP:9953"/>
        <dbReference type="ChEBI" id="CHEBI:15378"/>
        <dbReference type="ChEBI" id="CHEBI:57453"/>
        <dbReference type="ChEBI" id="CHEBI:78530"/>
        <dbReference type="ChEBI" id="CHEBI:78844"/>
        <dbReference type="ChEBI" id="CHEBI:195366"/>
        <dbReference type="EC" id="2.1.2.9"/>
    </reaction>
</comment>
<comment type="similarity">
    <text evidence="1">Belongs to the Fmt family.</text>
</comment>
<proteinExistence type="inferred from homology"/>
<feature type="chain" id="PRO_1000020175" description="Methionyl-tRNA formyltransferase">
    <location>
        <begin position="1"/>
        <end position="311"/>
    </location>
</feature>
<feature type="binding site" evidence="1">
    <location>
        <begin position="110"/>
        <end position="113"/>
    </location>
    <ligand>
        <name>(6S)-5,6,7,8-tetrahydrofolate</name>
        <dbReference type="ChEBI" id="CHEBI:57453"/>
    </ligand>
</feature>
<gene>
    <name evidence="1" type="primary">fmt</name>
    <name type="ordered locus">SAK_0386</name>
</gene>
<keyword id="KW-0648">Protein biosynthesis</keyword>
<keyword id="KW-0808">Transferase</keyword>
<organism>
    <name type="scientific">Streptococcus agalactiae serotype Ia (strain ATCC 27591 / A909 / CDC SS700)</name>
    <dbReference type="NCBI Taxonomy" id="205921"/>
    <lineage>
        <taxon>Bacteria</taxon>
        <taxon>Bacillati</taxon>
        <taxon>Bacillota</taxon>
        <taxon>Bacilli</taxon>
        <taxon>Lactobacillales</taxon>
        <taxon>Streptococcaceae</taxon>
        <taxon>Streptococcus</taxon>
    </lineage>
</organism>
<sequence length="311" mass="33808">MTKLLFMGTPDFSATVLKGILADGKYDVLAVVTQPDRAVGRKKEIKMTPVKEVALENNIPVYQPEKLSGSPELEQLMTLGADGIVTAAFGQFLPTKLLESVGFAINVHASLLPKYRGGAPIHYAIINGEKEAGVTIMEMVAKMDAGDMVSKASVEITDEDNVGTMFDRLAVVGRDLLLDTLPGYLSGDIKPIPQNEEEVSFSPNISPDEERIDWNKSSRDIFNHVRGMYPWPVAHTLLEGNRFKLYEVTMSEGKGSPGQVIAKTKNSLTVATGDGAIELKSVQPAGKPRMDIKDFLNGVGRNLEIGDKFGE</sequence>
<accession>Q3K365</accession>
<dbReference type="EC" id="2.1.2.9" evidence="1"/>
<dbReference type="EMBL" id="CP000114">
    <property type="protein sequence ID" value="ABA45890.1"/>
    <property type="molecule type" value="Genomic_DNA"/>
</dbReference>
<dbReference type="RefSeq" id="WP_000163893.1">
    <property type="nucleotide sequence ID" value="NC_007432.1"/>
</dbReference>
<dbReference type="SMR" id="Q3K365"/>
<dbReference type="GeneID" id="66885288"/>
<dbReference type="KEGG" id="sak:SAK_0386"/>
<dbReference type="HOGENOM" id="CLU_033347_1_1_9"/>
<dbReference type="GO" id="GO:0005829">
    <property type="term" value="C:cytosol"/>
    <property type="evidence" value="ECO:0007669"/>
    <property type="project" value="TreeGrafter"/>
</dbReference>
<dbReference type="GO" id="GO:0004479">
    <property type="term" value="F:methionyl-tRNA formyltransferase activity"/>
    <property type="evidence" value="ECO:0007669"/>
    <property type="project" value="UniProtKB-UniRule"/>
</dbReference>
<dbReference type="CDD" id="cd08646">
    <property type="entry name" value="FMT_core_Met-tRNA-FMT_N"/>
    <property type="match status" value="1"/>
</dbReference>
<dbReference type="CDD" id="cd08704">
    <property type="entry name" value="Met_tRNA_FMT_C"/>
    <property type="match status" value="1"/>
</dbReference>
<dbReference type="FunFam" id="3.40.50.170:FF:000004">
    <property type="entry name" value="Methionyl-tRNA formyltransferase"/>
    <property type="match status" value="1"/>
</dbReference>
<dbReference type="Gene3D" id="3.10.25.10">
    <property type="entry name" value="Formyl transferase, C-terminal domain"/>
    <property type="match status" value="1"/>
</dbReference>
<dbReference type="Gene3D" id="3.40.50.170">
    <property type="entry name" value="Formyl transferase, N-terminal domain"/>
    <property type="match status" value="1"/>
</dbReference>
<dbReference type="HAMAP" id="MF_00182">
    <property type="entry name" value="Formyl_trans"/>
    <property type="match status" value="1"/>
</dbReference>
<dbReference type="InterPro" id="IPR005794">
    <property type="entry name" value="Fmt"/>
</dbReference>
<dbReference type="InterPro" id="IPR005793">
    <property type="entry name" value="Formyl_trans_C"/>
</dbReference>
<dbReference type="InterPro" id="IPR037022">
    <property type="entry name" value="Formyl_trans_C_sf"/>
</dbReference>
<dbReference type="InterPro" id="IPR002376">
    <property type="entry name" value="Formyl_transf_N"/>
</dbReference>
<dbReference type="InterPro" id="IPR036477">
    <property type="entry name" value="Formyl_transf_N_sf"/>
</dbReference>
<dbReference type="InterPro" id="IPR011034">
    <property type="entry name" value="Formyl_transferase-like_C_sf"/>
</dbReference>
<dbReference type="InterPro" id="IPR001555">
    <property type="entry name" value="GART_AS"/>
</dbReference>
<dbReference type="InterPro" id="IPR044135">
    <property type="entry name" value="Met-tRNA-FMT_C"/>
</dbReference>
<dbReference type="InterPro" id="IPR041711">
    <property type="entry name" value="Met-tRNA-FMT_N"/>
</dbReference>
<dbReference type="NCBIfam" id="TIGR00460">
    <property type="entry name" value="fmt"/>
    <property type="match status" value="1"/>
</dbReference>
<dbReference type="PANTHER" id="PTHR11138">
    <property type="entry name" value="METHIONYL-TRNA FORMYLTRANSFERASE"/>
    <property type="match status" value="1"/>
</dbReference>
<dbReference type="PANTHER" id="PTHR11138:SF5">
    <property type="entry name" value="METHIONYL-TRNA FORMYLTRANSFERASE, MITOCHONDRIAL"/>
    <property type="match status" value="1"/>
</dbReference>
<dbReference type="Pfam" id="PF02911">
    <property type="entry name" value="Formyl_trans_C"/>
    <property type="match status" value="1"/>
</dbReference>
<dbReference type="Pfam" id="PF00551">
    <property type="entry name" value="Formyl_trans_N"/>
    <property type="match status" value="1"/>
</dbReference>
<dbReference type="SUPFAM" id="SSF50486">
    <property type="entry name" value="FMT C-terminal domain-like"/>
    <property type="match status" value="1"/>
</dbReference>
<dbReference type="SUPFAM" id="SSF53328">
    <property type="entry name" value="Formyltransferase"/>
    <property type="match status" value="1"/>
</dbReference>
<dbReference type="PROSITE" id="PS00373">
    <property type="entry name" value="GART"/>
    <property type="match status" value="1"/>
</dbReference>
<name>FMT_STRA1</name>